<protein>
    <recommendedName>
        <fullName evidence="7">Ascorbate transporter, chloroplastic</fullName>
    </recommendedName>
    <alternativeName>
        <fullName>Phosphate transporter PHT4;4</fullName>
        <shortName>AtPHT4;4</shortName>
    </alternativeName>
    <alternativeName>
        <fullName>Probable anion transporter 2</fullName>
    </alternativeName>
</protein>
<accession>Q8GX78</accession>
<accession>O23065</accession>
<evidence type="ECO:0000255" key="1"/>
<evidence type="ECO:0000269" key="2">
    <source>
    </source>
</evidence>
<evidence type="ECO:0000269" key="3">
    <source>
    </source>
</evidence>
<evidence type="ECO:0000269" key="4">
    <source>
    </source>
</evidence>
<evidence type="ECO:0000269" key="5">
    <source>
    </source>
</evidence>
<evidence type="ECO:0000269" key="6">
    <source>
    </source>
</evidence>
<evidence type="ECO:0000303" key="7">
    <source>
    </source>
</evidence>
<evidence type="ECO:0000305" key="8"/>
<proteinExistence type="evidence at protein level"/>
<keyword id="KW-0150">Chloroplast</keyword>
<keyword id="KW-0472">Membrane</keyword>
<keyword id="KW-0934">Plastid</keyword>
<keyword id="KW-1001">Plastid inner membrane</keyword>
<keyword id="KW-1185">Reference proteome</keyword>
<keyword id="KW-0809">Transit peptide</keyword>
<keyword id="KW-0812">Transmembrane</keyword>
<keyword id="KW-1133">Transmembrane helix</keyword>
<sequence length="541" mass="59614">MALGGLISNRNFGSFIGSGNGCQRLGKSGAEVSKLFPNALLCRNHQPLQASLHHESGHMRRSFGCFLQPRMDSVIRFRNSIKINRSRAYYKSEESDITEGVVPSADGSAEAILVEGNLQNASPWWQQFPRRWVIVLLCFSSFLLCNMDRVNMSIAILPMSQEYNWSSATVGLIQSSFFWGYLLTQILGGIWADKFGGKVVLGFGVVWWSFATIMTPIAARLGLPFLLVVRAFMGIGEGVAMPAMNNMLSKWIPVSERSRSLALVYSGMYLGSVTGLAFSPMLITKFGWPSVFYSFGSLGSIWFLLWLKFAYSSPKDDPDLSEEEKKVILGGSKPREPVTVIPWKLILSKPPVWALIISHFCHNWGTFILLTWMPTYYNQVLKFNLTESGLLCVLPWLTMAVFANIGGWIADTLVSRGLSITNVRKIMQSIGFLGPAFFLSQLSHVKTPAMAVLCMACSQGSDAFSQSGLYSNHQDIGPRYAGVLLGLSNTAGVLAGVFGTAATGYILQRGSWDDVFKVAVALYLIGTLVWNLFATGEKILD</sequence>
<name>ANTR2_ARATH</name>
<comment type="function">
    <text evidence="3 6">Inorganic phosphate and probable anion transporter (PubMed:18086223). Ascorbate transporter bridging the chloroplast envelope. Transports ascorbate from the cytosol into the chloroplast. Requires chloride ions and the presence of an electrochemical potential across the membrane for activity (PubMed:25557369).</text>
</comment>
<comment type="activity regulation">
    <text evidence="6">Insensitive to dehydroascorbate, p-isoascorbate, inorganic phosphate, glutamate, ATP, p-aminohippuric acid or tetraethylammonium.</text>
</comment>
<comment type="biophysicochemical properties">
    <kinetics>
        <KM evidence="6">1.2 mM for ascorbate</KM>
        <Vmax evidence="6">520.0 nmol/min/mg enzyme</Vmax>
        <text evidence="6">Ascorbate uptake shows an absolute requirement for Cl(-).</text>
    </kinetics>
</comment>
<comment type="subcellular location">
    <subcellularLocation>
        <location evidence="2 4 6">Plastid</location>
        <location evidence="2 4 6">Chloroplast inner membrane</location>
        <topology evidence="2 4">Multi-pass membrane protein</topology>
    </subcellularLocation>
</comment>
<comment type="tissue specificity">
    <text evidence="2 5 6">Expressed in stems, developing siliques, leaf mesophyll cells and sepals of mature flowers. Not detected in roots. Detected in palisade tissue rather than spongy tissue from the leaves (PubMed:25557369).</text>
</comment>
<comment type="developmental stage">
    <text evidence="2">Expressed in the developing embryo at the upturned-U stage.</text>
</comment>
<comment type="induction">
    <text evidence="5 6">Expressed with a circadian rhythm showing a peak during the middle of the day (under long day conditions) (PubMed:19513231). Up-regulated by light (PubMed:25557369).</text>
</comment>
<comment type="disruption phenotype">
    <text evidence="6">No visible phenotype, but decreased reduced ascorbate content in leaves and decreased xanthophyll cycle for heat dissipation of excessive energy in photosynthesis.</text>
</comment>
<comment type="similarity">
    <text evidence="8">Belongs to the major facilitator superfamily. Sodium/anion cotransporter (TC 2.A.1.14) family.</text>
</comment>
<comment type="sequence caution" evidence="8">
    <conflict type="erroneous gene model prediction">
        <sequence resource="EMBL-CDS" id="AAB62846"/>
    </conflict>
</comment>
<comment type="sequence caution" evidence="8">
    <conflict type="erroneous gene model prediction">
        <sequence resource="EMBL-CDS" id="AAF02804"/>
    </conflict>
</comment>
<comment type="sequence caution" evidence="8">
    <conflict type="erroneous gene model prediction">
        <sequence resource="EMBL-CDS" id="CAB80795"/>
    </conflict>
</comment>
<reference key="1">
    <citation type="journal article" date="1999" name="Nature">
        <title>Sequence and analysis of chromosome 4 of the plant Arabidopsis thaliana.</title>
        <authorList>
            <person name="Mayer K.F.X."/>
            <person name="Schueller C."/>
            <person name="Wambutt R."/>
            <person name="Murphy G."/>
            <person name="Volckaert G."/>
            <person name="Pohl T."/>
            <person name="Duesterhoeft A."/>
            <person name="Stiekema W."/>
            <person name="Entian K.-D."/>
            <person name="Terryn N."/>
            <person name="Harris B."/>
            <person name="Ansorge W."/>
            <person name="Brandt P."/>
            <person name="Grivell L.A."/>
            <person name="Rieger M."/>
            <person name="Weichselgartner M."/>
            <person name="de Simone V."/>
            <person name="Obermaier B."/>
            <person name="Mache R."/>
            <person name="Mueller M."/>
            <person name="Kreis M."/>
            <person name="Delseny M."/>
            <person name="Puigdomenech P."/>
            <person name="Watson M."/>
            <person name="Schmidtheini T."/>
            <person name="Reichert B."/>
            <person name="Portetelle D."/>
            <person name="Perez-Alonso M."/>
            <person name="Boutry M."/>
            <person name="Bancroft I."/>
            <person name="Vos P."/>
            <person name="Hoheisel J."/>
            <person name="Zimmermann W."/>
            <person name="Wedler H."/>
            <person name="Ridley P."/>
            <person name="Langham S.-A."/>
            <person name="McCullagh B."/>
            <person name="Bilham L."/>
            <person name="Robben J."/>
            <person name="van der Schueren J."/>
            <person name="Grymonprez B."/>
            <person name="Chuang Y.-J."/>
            <person name="Vandenbussche F."/>
            <person name="Braeken M."/>
            <person name="Weltjens I."/>
            <person name="Voet M."/>
            <person name="Bastiaens I."/>
            <person name="Aert R."/>
            <person name="Defoor E."/>
            <person name="Weitzenegger T."/>
            <person name="Bothe G."/>
            <person name="Ramsperger U."/>
            <person name="Hilbert H."/>
            <person name="Braun M."/>
            <person name="Holzer E."/>
            <person name="Brandt A."/>
            <person name="Peters S."/>
            <person name="van Staveren M."/>
            <person name="Dirkse W."/>
            <person name="Mooijman P."/>
            <person name="Klein Lankhorst R."/>
            <person name="Rose M."/>
            <person name="Hauf J."/>
            <person name="Koetter P."/>
            <person name="Berneiser S."/>
            <person name="Hempel S."/>
            <person name="Feldpausch M."/>
            <person name="Lamberth S."/>
            <person name="Van den Daele H."/>
            <person name="De Keyser A."/>
            <person name="Buysshaert C."/>
            <person name="Gielen J."/>
            <person name="Villarroel R."/>
            <person name="De Clercq R."/>
            <person name="van Montagu M."/>
            <person name="Rogers J."/>
            <person name="Cronin A."/>
            <person name="Quail M.A."/>
            <person name="Bray-Allen S."/>
            <person name="Clark L."/>
            <person name="Doggett J."/>
            <person name="Hall S."/>
            <person name="Kay M."/>
            <person name="Lennard N."/>
            <person name="McLay K."/>
            <person name="Mayes R."/>
            <person name="Pettett A."/>
            <person name="Rajandream M.A."/>
            <person name="Lyne M."/>
            <person name="Benes V."/>
            <person name="Rechmann S."/>
            <person name="Borkova D."/>
            <person name="Bloecker H."/>
            <person name="Scharfe M."/>
            <person name="Grimm M."/>
            <person name="Loehnert T.-H."/>
            <person name="Dose S."/>
            <person name="de Haan M."/>
            <person name="Maarse A.C."/>
            <person name="Schaefer M."/>
            <person name="Mueller-Auer S."/>
            <person name="Gabel C."/>
            <person name="Fuchs M."/>
            <person name="Fartmann B."/>
            <person name="Granderath K."/>
            <person name="Dauner D."/>
            <person name="Herzl A."/>
            <person name="Neumann S."/>
            <person name="Argiriou A."/>
            <person name="Vitale D."/>
            <person name="Liguori R."/>
            <person name="Piravandi E."/>
            <person name="Massenet O."/>
            <person name="Quigley F."/>
            <person name="Clabauld G."/>
            <person name="Muendlein A."/>
            <person name="Felber R."/>
            <person name="Schnabl S."/>
            <person name="Hiller R."/>
            <person name="Schmidt W."/>
            <person name="Lecharny A."/>
            <person name="Aubourg S."/>
            <person name="Chefdor F."/>
            <person name="Cooke R."/>
            <person name="Berger C."/>
            <person name="Monfort A."/>
            <person name="Casacuberta E."/>
            <person name="Gibbons T."/>
            <person name="Weber N."/>
            <person name="Vandenbol M."/>
            <person name="Bargues M."/>
            <person name="Terol J."/>
            <person name="Torres A."/>
            <person name="Perez-Perez A."/>
            <person name="Purnelle B."/>
            <person name="Bent E."/>
            <person name="Johnson S."/>
            <person name="Tacon D."/>
            <person name="Jesse T."/>
            <person name="Heijnen L."/>
            <person name="Schwarz S."/>
            <person name="Scholler P."/>
            <person name="Heber S."/>
            <person name="Francs P."/>
            <person name="Bielke C."/>
            <person name="Frishman D."/>
            <person name="Haase D."/>
            <person name="Lemcke K."/>
            <person name="Mewes H.-W."/>
            <person name="Stocker S."/>
            <person name="Zaccaria P."/>
            <person name="Bevan M."/>
            <person name="Wilson R.K."/>
            <person name="de la Bastide M."/>
            <person name="Habermann K."/>
            <person name="Parnell L."/>
            <person name="Dedhia N."/>
            <person name="Gnoj L."/>
            <person name="Schutz K."/>
            <person name="Huang E."/>
            <person name="Spiegel L."/>
            <person name="Sekhon M."/>
            <person name="Murray J."/>
            <person name="Sheet P."/>
            <person name="Cordes M."/>
            <person name="Abu-Threideh J."/>
            <person name="Stoneking T."/>
            <person name="Kalicki J."/>
            <person name="Graves T."/>
            <person name="Harmon G."/>
            <person name="Edwards J."/>
            <person name="Latreille P."/>
            <person name="Courtney L."/>
            <person name="Cloud J."/>
            <person name="Abbott A."/>
            <person name="Scott K."/>
            <person name="Johnson D."/>
            <person name="Minx P."/>
            <person name="Bentley D."/>
            <person name="Fulton B."/>
            <person name="Miller N."/>
            <person name="Greco T."/>
            <person name="Kemp K."/>
            <person name="Kramer J."/>
            <person name="Fulton L."/>
            <person name="Mardis E."/>
            <person name="Dante M."/>
            <person name="Pepin K."/>
            <person name="Hillier L.W."/>
            <person name="Nelson J."/>
            <person name="Spieth J."/>
            <person name="Ryan E."/>
            <person name="Andrews S."/>
            <person name="Geisel C."/>
            <person name="Layman D."/>
            <person name="Du H."/>
            <person name="Ali J."/>
            <person name="Berghoff A."/>
            <person name="Jones K."/>
            <person name="Drone K."/>
            <person name="Cotton M."/>
            <person name="Joshu C."/>
            <person name="Antonoiu B."/>
            <person name="Zidanic M."/>
            <person name="Strong C."/>
            <person name="Sun H."/>
            <person name="Lamar B."/>
            <person name="Yordan C."/>
            <person name="Ma P."/>
            <person name="Zhong J."/>
            <person name="Preston R."/>
            <person name="Vil D."/>
            <person name="Shekher M."/>
            <person name="Matero A."/>
            <person name="Shah R."/>
            <person name="Swaby I.K."/>
            <person name="O'Shaughnessy A."/>
            <person name="Rodriguez M."/>
            <person name="Hoffman J."/>
            <person name="Till S."/>
            <person name="Granat S."/>
            <person name="Shohdy N."/>
            <person name="Hasegawa A."/>
            <person name="Hameed A."/>
            <person name="Lodhi M."/>
            <person name="Johnson A."/>
            <person name="Chen E."/>
            <person name="Marra M.A."/>
            <person name="Martienssen R."/>
            <person name="McCombie W.R."/>
        </authorList>
    </citation>
    <scope>NUCLEOTIDE SEQUENCE [LARGE SCALE GENOMIC DNA]</scope>
    <source>
        <strain>cv. Columbia</strain>
    </source>
</reference>
<reference key="2">
    <citation type="journal article" date="2017" name="Plant J.">
        <title>Araport11: a complete reannotation of the Arabidopsis thaliana reference genome.</title>
        <authorList>
            <person name="Cheng C.Y."/>
            <person name="Krishnakumar V."/>
            <person name="Chan A.P."/>
            <person name="Thibaud-Nissen F."/>
            <person name="Schobel S."/>
            <person name="Town C.D."/>
        </authorList>
    </citation>
    <scope>GENOME REANNOTATION</scope>
    <source>
        <strain>cv. Columbia</strain>
    </source>
</reference>
<reference key="3">
    <citation type="journal article" date="2002" name="Science">
        <title>Functional annotation of a full-length Arabidopsis cDNA collection.</title>
        <authorList>
            <person name="Seki M."/>
            <person name="Narusaka M."/>
            <person name="Kamiya A."/>
            <person name="Ishida J."/>
            <person name="Satou M."/>
            <person name="Sakurai T."/>
            <person name="Nakajima M."/>
            <person name="Enju A."/>
            <person name="Akiyama K."/>
            <person name="Oono Y."/>
            <person name="Muramatsu M."/>
            <person name="Hayashizaki Y."/>
            <person name="Kawai J."/>
            <person name="Carninci P."/>
            <person name="Itoh M."/>
            <person name="Ishii Y."/>
            <person name="Arakawa T."/>
            <person name="Shibata K."/>
            <person name="Shinagawa A."/>
            <person name="Shinozaki K."/>
        </authorList>
    </citation>
    <scope>NUCLEOTIDE SEQUENCE [LARGE SCALE MRNA]</scope>
    <source>
        <strain>cv. Columbia</strain>
    </source>
</reference>
<reference key="4">
    <citation type="journal article" date="2003" name="Science">
        <title>Empirical analysis of transcriptional activity in the Arabidopsis genome.</title>
        <authorList>
            <person name="Yamada K."/>
            <person name="Lim J."/>
            <person name="Dale J.M."/>
            <person name="Chen H."/>
            <person name="Shinn P."/>
            <person name="Palm C.J."/>
            <person name="Southwick A.M."/>
            <person name="Wu H.C."/>
            <person name="Kim C.J."/>
            <person name="Nguyen M."/>
            <person name="Pham P.K."/>
            <person name="Cheuk R.F."/>
            <person name="Karlin-Newmann G."/>
            <person name="Liu S.X."/>
            <person name="Lam B."/>
            <person name="Sakano H."/>
            <person name="Wu T."/>
            <person name="Yu G."/>
            <person name="Miranda M."/>
            <person name="Quach H.L."/>
            <person name="Tripp M."/>
            <person name="Chang C.H."/>
            <person name="Lee J.M."/>
            <person name="Toriumi M.J."/>
            <person name="Chan M.M."/>
            <person name="Tang C.C."/>
            <person name="Onodera C.S."/>
            <person name="Deng J.M."/>
            <person name="Akiyama K."/>
            <person name="Ansari Y."/>
            <person name="Arakawa T."/>
            <person name="Banh J."/>
            <person name="Banno F."/>
            <person name="Bowser L."/>
            <person name="Brooks S.Y."/>
            <person name="Carninci P."/>
            <person name="Chao Q."/>
            <person name="Choy N."/>
            <person name="Enju A."/>
            <person name="Goldsmith A.D."/>
            <person name="Gurjal M."/>
            <person name="Hansen N.F."/>
            <person name="Hayashizaki Y."/>
            <person name="Johnson-Hopson C."/>
            <person name="Hsuan V.W."/>
            <person name="Iida K."/>
            <person name="Karnes M."/>
            <person name="Khan S."/>
            <person name="Koesema E."/>
            <person name="Ishida J."/>
            <person name="Jiang P.X."/>
            <person name="Jones T."/>
            <person name="Kawai J."/>
            <person name="Kamiya A."/>
            <person name="Meyers C."/>
            <person name="Nakajima M."/>
            <person name="Narusaka M."/>
            <person name="Seki M."/>
            <person name="Sakurai T."/>
            <person name="Satou M."/>
            <person name="Tamse R."/>
            <person name="Vaysberg M."/>
            <person name="Wallender E.K."/>
            <person name="Wong C."/>
            <person name="Yamamura Y."/>
            <person name="Yuan S."/>
            <person name="Shinozaki K."/>
            <person name="Davis R.W."/>
            <person name="Theologis A."/>
            <person name="Ecker J.R."/>
        </authorList>
    </citation>
    <scope>NUCLEOTIDE SEQUENCE [LARGE SCALE MRNA]</scope>
    <source>
        <strain>cv. Columbia</strain>
    </source>
</reference>
<reference key="5">
    <citation type="journal article" date="2004" name="Planta">
        <title>Characterization of a protein of the plastid inner envelope having homology to animal inorganic phosphate, chloride and organic-anion transporters.</title>
        <authorList>
            <person name="Roth C."/>
            <person name="Menzel G."/>
            <person name="Petetot J.M."/>
            <person name="Rochat-Hacker S."/>
            <person name="Poirier Y."/>
        </authorList>
    </citation>
    <scope>SUBCELLULAR LOCATION</scope>
    <scope>TISSUE SPECIFICITY</scope>
    <scope>DEVELOPMENTAL STAGE</scope>
    <scope>GENE FAMILY</scope>
    <scope>NOMENCLATURE</scope>
</reference>
<reference key="6">
    <citation type="journal article" date="2008" name="J. Biol. Chem.">
        <title>Arabidopsis ANTR1 is a thylakoid Na+-dependent phosphate transporter: functional characterization in Escherichia coli.</title>
        <authorList>
            <person name="Pavon L.R."/>
            <person name="Lundh F."/>
            <person name="Lundin B."/>
            <person name="Mishra A."/>
            <person name="Persson B.L."/>
            <person name="Spetea C."/>
        </authorList>
    </citation>
    <scope>SUBCELLULAR LOCATION</scope>
</reference>
<reference key="7">
    <citation type="journal article" date="2008" name="New Phytol.">
        <title>Functional analysis of the Arabidopsis PHT4 family of intracellular phosphate transporters.</title>
        <authorList>
            <person name="Guo B."/>
            <person name="Jin Y."/>
            <person name="Wussler C."/>
            <person name="Blancaflor E.B."/>
            <person name="Motes C.M."/>
            <person name="Versaw W.K."/>
        </authorList>
    </citation>
    <scope>FUNCTION</scope>
</reference>
<reference key="8">
    <citation type="journal article" date="2008" name="Plant Signal. Behav.">
        <title>Differential expression and phylogenetic analysis suggest specialization of plastid-localized members of the PHT4 phosphate transporter family for photosynthetic and heterotrophic tissues.</title>
        <authorList>
            <person name="Guo B."/>
            <person name="Irigoyen S."/>
            <person name="Fowler T.B."/>
            <person name="Versaw W.K."/>
        </authorList>
    </citation>
    <scope>TISSUE SPECIFICITY</scope>
    <scope>INDUCTION</scope>
</reference>
<reference key="9">
    <citation type="journal article" date="2015" name="Nat. Commun.">
        <title>AtPHT4;4 is a chloroplast-localized ascorbate transporter in Arabidopsis.</title>
        <authorList>
            <person name="Miyaji T."/>
            <person name="Kuromori T."/>
            <person name="Takeuchi Y."/>
            <person name="Yamaji N."/>
            <person name="Yokosho K."/>
            <person name="Shimazawa A."/>
            <person name="Sugimoto E."/>
            <person name="Omote H."/>
            <person name="Ma J.F."/>
            <person name="Shinozaki K."/>
            <person name="Moriyama Y."/>
        </authorList>
    </citation>
    <scope>FUNCTION</scope>
    <scope>BIOPHYSICOCHEMICAL PROPERTIES</scope>
    <scope>ACTIVITY REGULATION</scope>
    <scope>TISSUE SPECIFICITY</scope>
    <scope>INDUCTION BY LIGHT</scope>
    <scope>SUBCELLULAR LOCATION</scope>
    <scope>DISRUPTION PHENOTYPE</scope>
</reference>
<dbReference type="EMBL" id="AF013293">
    <property type="protein sequence ID" value="AAB62846.1"/>
    <property type="status" value="ALT_SEQ"/>
    <property type="molecule type" value="Genomic_DNA"/>
</dbReference>
<dbReference type="EMBL" id="AF195115">
    <property type="protein sequence ID" value="AAF02804.1"/>
    <property type="status" value="ALT_SEQ"/>
    <property type="molecule type" value="Genomic_DNA"/>
</dbReference>
<dbReference type="EMBL" id="AL161471">
    <property type="protein sequence ID" value="CAB80795.1"/>
    <property type="status" value="ALT_SEQ"/>
    <property type="molecule type" value="Genomic_DNA"/>
</dbReference>
<dbReference type="EMBL" id="CP002687">
    <property type="protein sequence ID" value="AEE81870.1"/>
    <property type="molecule type" value="Genomic_DNA"/>
</dbReference>
<dbReference type="EMBL" id="AK118390">
    <property type="protein sequence ID" value="BAC43000.1"/>
    <property type="molecule type" value="mRNA"/>
</dbReference>
<dbReference type="EMBL" id="BT009663">
    <property type="protein sequence ID" value="AAP78931.1"/>
    <property type="molecule type" value="mRNA"/>
</dbReference>
<dbReference type="PIR" id="T01534">
    <property type="entry name" value="T01534"/>
</dbReference>
<dbReference type="RefSeq" id="NP_567175.2">
    <property type="nucleotide sequence ID" value="NM_116261.4"/>
</dbReference>
<dbReference type="SMR" id="Q8GX78"/>
<dbReference type="BioGRID" id="13199">
    <property type="interactions" value="4"/>
</dbReference>
<dbReference type="FunCoup" id="Q8GX78">
    <property type="interactions" value="1042"/>
</dbReference>
<dbReference type="IntAct" id="Q8GX78">
    <property type="interactions" value="5"/>
</dbReference>
<dbReference type="STRING" id="3702.Q8GX78"/>
<dbReference type="TCDB" id="2.A.1.14.45">
    <property type="family name" value="the major facilitator superfamily (mfs)"/>
</dbReference>
<dbReference type="PaxDb" id="3702-AT4G00370.1"/>
<dbReference type="ProteomicsDB" id="244469"/>
<dbReference type="EnsemblPlants" id="AT4G00370.1">
    <property type="protein sequence ID" value="AT4G00370.1"/>
    <property type="gene ID" value="AT4G00370"/>
</dbReference>
<dbReference type="GeneID" id="827908"/>
<dbReference type="Gramene" id="AT4G00370.1">
    <property type="protein sequence ID" value="AT4G00370.1"/>
    <property type="gene ID" value="AT4G00370"/>
</dbReference>
<dbReference type="KEGG" id="ath:AT4G00370"/>
<dbReference type="Araport" id="AT4G00370"/>
<dbReference type="TAIR" id="AT4G00370">
    <property type="gene designation" value="ANTR2"/>
</dbReference>
<dbReference type="eggNOG" id="KOG2532">
    <property type="taxonomic scope" value="Eukaryota"/>
</dbReference>
<dbReference type="HOGENOM" id="CLU_001265_5_11_1"/>
<dbReference type="InParanoid" id="Q8GX78"/>
<dbReference type="OMA" id="RHIFGLM"/>
<dbReference type="OrthoDB" id="2250022at2759"/>
<dbReference type="PhylomeDB" id="Q8GX78"/>
<dbReference type="PRO" id="PR:Q8GX78"/>
<dbReference type="Proteomes" id="UP000006548">
    <property type="component" value="Chromosome 4"/>
</dbReference>
<dbReference type="ExpressionAtlas" id="Q8GX78">
    <property type="expression patterns" value="baseline and differential"/>
</dbReference>
<dbReference type="GO" id="GO:0009507">
    <property type="term" value="C:chloroplast"/>
    <property type="evidence" value="ECO:0007005"/>
    <property type="project" value="TAIR"/>
</dbReference>
<dbReference type="GO" id="GO:0009941">
    <property type="term" value="C:chloroplast envelope"/>
    <property type="evidence" value="ECO:0000314"/>
    <property type="project" value="TAIR"/>
</dbReference>
<dbReference type="GO" id="GO:0009706">
    <property type="term" value="C:chloroplast inner membrane"/>
    <property type="evidence" value="ECO:0000314"/>
    <property type="project" value="UniProtKB"/>
</dbReference>
<dbReference type="GO" id="GO:0009536">
    <property type="term" value="C:plastid"/>
    <property type="evidence" value="ECO:0000314"/>
    <property type="project" value="TAIR"/>
</dbReference>
<dbReference type="GO" id="GO:0015229">
    <property type="term" value="F:L-ascorbic acid transmembrane transporter activity"/>
    <property type="evidence" value="ECO:0000314"/>
    <property type="project" value="TAIR"/>
</dbReference>
<dbReference type="GO" id="GO:0005315">
    <property type="term" value="F:phosphate transmembrane transporter activity"/>
    <property type="evidence" value="ECO:0000314"/>
    <property type="project" value="TAIR"/>
</dbReference>
<dbReference type="GO" id="GO:0015882">
    <property type="term" value="P:L-ascorbic acid transmembrane transport"/>
    <property type="evidence" value="ECO:0000314"/>
    <property type="project" value="TAIR"/>
</dbReference>
<dbReference type="GO" id="GO:0010028">
    <property type="term" value="P:xanthophyll cycle"/>
    <property type="evidence" value="ECO:0000315"/>
    <property type="project" value="TAIR"/>
</dbReference>
<dbReference type="CDD" id="cd17380">
    <property type="entry name" value="MFS_SLC17A9_like"/>
    <property type="match status" value="1"/>
</dbReference>
<dbReference type="FunFam" id="1.20.1250.20:FF:000058">
    <property type="entry name" value="ascorbate transporter, chloroplastic isoform X1"/>
    <property type="match status" value="1"/>
</dbReference>
<dbReference type="FunFam" id="1.20.1250.20:FF:000086">
    <property type="entry name" value="ascorbate transporter, chloroplastic isoform X2"/>
    <property type="match status" value="1"/>
</dbReference>
<dbReference type="Gene3D" id="1.20.1250.20">
    <property type="entry name" value="MFS general substrate transporter like domains"/>
    <property type="match status" value="2"/>
</dbReference>
<dbReference type="InterPro" id="IPR011701">
    <property type="entry name" value="MFS"/>
</dbReference>
<dbReference type="InterPro" id="IPR020846">
    <property type="entry name" value="MFS_dom"/>
</dbReference>
<dbReference type="InterPro" id="IPR050382">
    <property type="entry name" value="MFS_Na/Anion_cotransporter"/>
</dbReference>
<dbReference type="InterPro" id="IPR036259">
    <property type="entry name" value="MFS_trans_sf"/>
</dbReference>
<dbReference type="InterPro" id="IPR044777">
    <property type="entry name" value="SLC17A9-like"/>
</dbReference>
<dbReference type="PANTHER" id="PTHR11662:SF255">
    <property type="entry name" value="ASCORBATE TRANSPORTER, CHLOROPLASTIC"/>
    <property type="match status" value="1"/>
</dbReference>
<dbReference type="PANTHER" id="PTHR11662">
    <property type="entry name" value="SOLUTE CARRIER FAMILY 17"/>
    <property type="match status" value="1"/>
</dbReference>
<dbReference type="Pfam" id="PF07690">
    <property type="entry name" value="MFS_1"/>
    <property type="match status" value="1"/>
</dbReference>
<dbReference type="SUPFAM" id="SSF103473">
    <property type="entry name" value="MFS general substrate transporter"/>
    <property type="match status" value="1"/>
</dbReference>
<dbReference type="PROSITE" id="PS50850">
    <property type="entry name" value="MFS"/>
    <property type="match status" value="1"/>
</dbReference>
<feature type="transit peptide" description="Chloroplast" evidence="1">
    <location>
        <begin position="1"/>
        <end position="28"/>
    </location>
</feature>
<feature type="chain" id="PRO_0000331535" description="Ascorbate transporter, chloroplastic">
    <location>
        <begin position="29"/>
        <end position="541"/>
    </location>
</feature>
<feature type="transmembrane region" description="Helical" evidence="1">
    <location>
        <begin position="133"/>
        <end position="155"/>
    </location>
</feature>
<feature type="transmembrane region" description="Helical" evidence="1">
    <location>
        <begin position="170"/>
        <end position="190"/>
    </location>
</feature>
<feature type="transmembrane region" description="Helical" evidence="1">
    <location>
        <begin position="199"/>
        <end position="219"/>
    </location>
</feature>
<feature type="transmembrane region" description="Helical" evidence="1">
    <location>
        <begin position="221"/>
        <end position="241"/>
    </location>
</feature>
<feature type="transmembrane region" description="Helical" evidence="1">
    <location>
        <begin position="263"/>
        <end position="283"/>
    </location>
</feature>
<feature type="transmembrane region" description="Helical" evidence="1">
    <location>
        <begin position="286"/>
        <end position="306"/>
    </location>
</feature>
<feature type="transmembrane region" description="Helical" evidence="1">
    <location>
        <begin position="352"/>
        <end position="372"/>
    </location>
</feature>
<feature type="transmembrane region" description="Helical" evidence="1">
    <location>
        <begin position="390"/>
        <end position="410"/>
    </location>
</feature>
<feature type="transmembrane region" description="Helical" evidence="1">
    <location>
        <begin position="430"/>
        <end position="450"/>
    </location>
</feature>
<feature type="transmembrane region" description="Helical" evidence="1">
    <location>
        <begin position="481"/>
        <end position="501"/>
    </location>
</feature>
<feature type="transmembrane region" description="Helical" evidence="1">
    <location>
        <begin position="515"/>
        <end position="535"/>
    </location>
</feature>
<organism>
    <name type="scientific">Arabidopsis thaliana</name>
    <name type="common">Mouse-ear cress</name>
    <dbReference type="NCBI Taxonomy" id="3702"/>
    <lineage>
        <taxon>Eukaryota</taxon>
        <taxon>Viridiplantae</taxon>
        <taxon>Streptophyta</taxon>
        <taxon>Embryophyta</taxon>
        <taxon>Tracheophyta</taxon>
        <taxon>Spermatophyta</taxon>
        <taxon>Magnoliopsida</taxon>
        <taxon>eudicotyledons</taxon>
        <taxon>Gunneridae</taxon>
        <taxon>Pentapetalae</taxon>
        <taxon>rosids</taxon>
        <taxon>malvids</taxon>
        <taxon>Brassicales</taxon>
        <taxon>Brassicaceae</taxon>
        <taxon>Camelineae</taxon>
        <taxon>Arabidopsis</taxon>
    </lineage>
</organism>
<gene>
    <name type="primary">PHT4;4</name>
    <name type="synonym">ANTR2</name>
    <name type="ordered locus">At4g00370</name>
    <name type="ORF">A_IG005I10_nn</name>
    <name type="ORF">F5I10.7</name>
</gene>